<keyword id="KW-0255">Endonuclease</keyword>
<keyword id="KW-0378">Hydrolase</keyword>
<keyword id="KW-0540">Nuclease</keyword>
<keyword id="KW-1185">Reference proteome</keyword>
<keyword id="KW-0694">RNA-binding</keyword>
<keyword id="KW-0819">tRNA processing</keyword>
<evidence type="ECO:0000255" key="1">
    <source>
        <dbReference type="HAMAP-Rule" id="MF_00227"/>
    </source>
</evidence>
<reference key="1">
    <citation type="journal article" date="2006" name="Proc. Natl. Acad. Sci. U.S.A.">
        <title>Comparative genomics of the lactic acid bacteria.</title>
        <authorList>
            <person name="Makarova K.S."/>
            <person name="Slesarev A."/>
            <person name="Wolf Y.I."/>
            <person name="Sorokin A."/>
            <person name="Mirkin B."/>
            <person name="Koonin E.V."/>
            <person name="Pavlov A."/>
            <person name="Pavlova N."/>
            <person name="Karamychev V."/>
            <person name="Polouchine N."/>
            <person name="Shakhova V."/>
            <person name="Grigoriev I."/>
            <person name="Lou Y."/>
            <person name="Rohksar D."/>
            <person name="Lucas S."/>
            <person name="Huang K."/>
            <person name="Goodstein D.M."/>
            <person name="Hawkins T."/>
            <person name="Plengvidhya V."/>
            <person name="Welker D."/>
            <person name="Hughes J."/>
            <person name="Goh Y."/>
            <person name="Benson A."/>
            <person name="Baldwin K."/>
            <person name="Lee J.-H."/>
            <person name="Diaz-Muniz I."/>
            <person name="Dosti B."/>
            <person name="Smeianov V."/>
            <person name="Wechter W."/>
            <person name="Barabote R."/>
            <person name="Lorca G."/>
            <person name="Altermann E."/>
            <person name="Barrangou R."/>
            <person name="Ganesan B."/>
            <person name="Xie Y."/>
            <person name="Rawsthorne H."/>
            <person name="Tamir D."/>
            <person name="Parker C."/>
            <person name="Breidt F."/>
            <person name="Broadbent J.R."/>
            <person name="Hutkins R."/>
            <person name="O'Sullivan D."/>
            <person name="Steele J."/>
            <person name="Unlu G."/>
            <person name="Saier M.H. Jr."/>
            <person name="Klaenhammer T."/>
            <person name="Richardson P."/>
            <person name="Kozyavkin S."/>
            <person name="Weimer B.C."/>
            <person name="Mills D.A."/>
        </authorList>
    </citation>
    <scope>NUCLEOTIDE SEQUENCE [LARGE SCALE GENOMIC DNA]</scope>
    <source>
        <strain>ATCC 367 / BCRC 12310 / CIP 105137 / JCM 1170 / LMG 11437 / NCIMB 947 / NCTC 947</strain>
    </source>
</reference>
<accession>Q03N61</accession>
<protein>
    <recommendedName>
        <fullName evidence="1">Ribonuclease P protein component</fullName>
        <shortName evidence="1">RNase P protein</shortName>
        <shortName evidence="1">RNaseP protein</shortName>
        <ecNumber evidence="1">3.1.26.5</ecNumber>
    </recommendedName>
    <alternativeName>
        <fullName evidence="1">Protein C5</fullName>
    </alternativeName>
</protein>
<dbReference type="EC" id="3.1.26.5" evidence="1"/>
<dbReference type="EMBL" id="CP000416">
    <property type="protein sequence ID" value="ABJ65361.1"/>
    <property type="molecule type" value="Genomic_DNA"/>
</dbReference>
<dbReference type="RefSeq" id="WP_011668978.1">
    <property type="nucleotide sequence ID" value="NC_008497.1"/>
</dbReference>
<dbReference type="SMR" id="Q03N61"/>
<dbReference type="STRING" id="387344.LVIS_2313"/>
<dbReference type="GeneID" id="56994231"/>
<dbReference type="KEGG" id="lbr:LVIS_2313"/>
<dbReference type="eggNOG" id="COG0594">
    <property type="taxonomic scope" value="Bacteria"/>
</dbReference>
<dbReference type="HOGENOM" id="CLU_117179_9_1_9"/>
<dbReference type="Proteomes" id="UP000001652">
    <property type="component" value="Chromosome"/>
</dbReference>
<dbReference type="GO" id="GO:0030677">
    <property type="term" value="C:ribonuclease P complex"/>
    <property type="evidence" value="ECO:0007669"/>
    <property type="project" value="TreeGrafter"/>
</dbReference>
<dbReference type="GO" id="GO:0042781">
    <property type="term" value="F:3'-tRNA processing endoribonuclease activity"/>
    <property type="evidence" value="ECO:0007669"/>
    <property type="project" value="TreeGrafter"/>
</dbReference>
<dbReference type="GO" id="GO:0004526">
    <property type="term" value="F:ribonuclease P activity"/>
    <property type="evidence" value="ECO:0007669"/>
    <property type="project" value="UniProtKB-UniRule"/>
</dbReference>
<dbReference type="GO" id="GO:0000049">
    <property type="term" value="F:tRNA binding"/>
    <property type="evidence" value="ECO:0007669"/>
    <property type="project" value="UniProtKB-UniRule"/>
</dbReference>
<dbReference type="GO" id="GO:0001682">
    <property type="term" value="P:tRNA 5'-leader removal"/>
    <property type="evidence" value="ECO:0007669"/>
    <property type="project" value="UniProtKB-UniRule"/>
</dbReference>
<dbReference type="FunFam" id="3.30.230.10:FF:000021">
    <property type="entry name" value="Ribonuclease P protein component"/>
    <property type="match status" value="1"/>
</dbReference>
<dbReference type="Gene3D" id="3.30.230.10">
    <property type="match status" value="1"/>
</dbReference>
<dbReference type="HAMAP" id="MF_00227">
    <property type="entry name" value="RNase_P"/>
    <property type="match status" value="1"/>
</dbReference>
<dbReference type="InterPro" id="IPR020568">
    <property type="entry name" value="Ribosomal_Su5_D2-typ_SF"/>
</dbReference>
<dbReference type="InterPro" id="IPR014721">
    <property type="entry name" value="Ribsml_uS5_D2-typ_fold_subgr"/>
</dbReference>
<dbReference type="InterPro" id="IPR000100">
    <property type="entry name" value="RNase_P"/>
</dbReference>
<dbReference type="NCBIfam" id="TIGR00188">
    <property type="entry name" value="rnpA"/>
    <property type="match status" value="1"/>
</dbReference>
<dbReference type="PANTHER" id="PTHR33992">
    <property type="entry name" value="RIBONUCLEASE P PROTEIN COMPONENT"/>
    <property type="match status" value="1"/>
</dbReference>
<dbReference type="PANTHER" id="PTHR33992:SF1">
    <property type="entry name" value="RIBONUCLEASE P PROTEIN COMPONENT"/>
    <property type="match status" value="1"/>
</dbReference>
<dbReference type="Pfam" id="PF00825">
    <property type="entry name" value="Ribonuclease_P"/>
    <property type="match status" value="1"/>
</dbReference>
<dbReference type="SUPFAM" id="SSF54211">
    <property type="entry name" value="Ribosomal protein S5 domain 2-like"/>
    <property type="match status" value="1"/>
</dbReference>
<gene>
    <name evidence="1" type="primary">rnpA</name>
    <name type="ordered locus">LVIS_2313</name>
</gene>
<organism>
    <name type="scientific">Levilactobacillus brevis (strain ATCC 367 / BCRC 12310 / CIP 105137 / JCM 1170 / LMG 11437 / NCIMB 947 / NCTC 947)</name>
    <name type="common">Lactobacillus brevis</name>
    <dbReference type="NCBI Taxonomy" id="387344"/>
    <lineage>
        <taxon>Bacteria</taxon>
        <taxon>Bacillati</taxon>
        <taxon>Bacillota</taxon>
        <taxon>Bacilli</taxon>
        <taxon>Lactobacillales</taxon>
        <taxon>Lactobacillaceae</taxon>
        <taxon>Levilactobacillus</taxon>
    </lineage>
</organism>
<comment type="function">
    <text evidence="1">RNaseP catalyzes the removal of the 5'-leader sequence from pre-tRNA to produce the mature 5'-terminus. It can also cleave other RNA substrates such as 4.5S RNA. The protein component plays an auxiliary but essential role in vivo by binding to the 5'-leader sequence and broadening the substrate specificity of the ribozyme.</text>
</comment>
<comment type="catalytic activity">
    <reaction evidence="1">
        <text>Endonucleolytic cleavage of RNA, removing 5'-extranucleotides from tRNA precursor.</text>
        <dbReference type="EC" id="3.1.26.5"/>
    </reaction>
</comment>
<comment type="subunit">
    <text evidence="1">Consists of a catalytic RNA component (M1 or rnpB) and a protein subunit.</text>
</comment>
<comment type="similarity">
    <text evidence="1">Belongs to the RnpA family.</text>
</comment>
<sequence>MRKSYRIKKEAEFQQVFETRNSVANRQFVVYSMEKPQQPHFRVGISVGKKIGNAVHRNWVKRRIRQSLLELKPHLKQDVDFLVIARPRADGISMTDAKRSLVHVLKLAKLLDSDYSEE</sequence>
<proteinExistence type="inferred from homology"/>
<name>RNPA_LEVBA</name>
<feature type="chain" id="PRO_1000021415" description="Ribonuclease P protein component">
    <location>
        <begin position="1"/>
        <end position="118"/>
    </location>
</feature>